<name>CBPX2_SACS2</name>
<accession>P58156</accession>
<reference key="1">
    <citation type="journal article" date="2001" name="Proc. Natl. Acad. Sci. U.S.A.">
        <title>The complete genome of the crenarchaeon Sulfolobus solfataricus P2.</title>
        <authorList>
            <person name="She Q."/>
            <person name="Singh R.K."/>
            <person name="Confalonieri F."/>
            <person name="Zivanovic Y."/>
            <person name="Allard G."/>
            <person name="Awayez M.J."/>
            <person name="Chan-Weiher C.C.-Y."/>
            <person name="Clausen I.G."/>
            <person name="Curtis B.A."/>
            <person name="De Moors A."/>
            <person name="Erauso G."/>
            <person name="Fletcher C."/>
            <person name="Gordon P.M.K."/>
            <person name="Heikamp-de Jong I."/>
            <person name="Jeffries A.C."/>
            <person name="Kozera C.J."/>
            <person name="Medina N."/>
            <person name="Peng X."/>
            <person name="Thi-Ngoc H.P."/>
            <person name="Redder P."/>
            <person name="Schenk M.E."/>
            <person name="Theriault C."/>
            <person name="Tolstrup N."/>
            <person name="Charlebois R.L."/>
            <person name="Doolittle W.F."/>
            <person name="Duguet M."/>
            <person name="Gaasterland T."/>
            <person name="Garrett R.A."/>
            <person name="Ragan M.A."/>
            <person name="Sensen C.W."/>
            <person name="Van der Oost J."/>
        </authorList>
    </citation>
    <scope>NUCLEOTIDE SEQUENCE [LARGE SCALE GENOMIC DNA]</scope>
    <source>
        <strain>ATCC 35092 / DSM 1617 / JCM 11322 / P2</strain>
    </source>
</reference>
<sequence length="393" mass="42993">MDLVEKLKNDVKEIEDWIIQIRRKIHENPELSYKEYSTSKLVAETLRKLGIEVEEGVGLPTAVVGKIRGNKPGKTVALRADMDALPVEETSDVEFKSKVKGVMHACGHDTHVAMLLGGAYLLVKNKDLISGEIRLIFQPAEEDGGLGGAKPMIEAGVMNGVDYVFGIHISSSYPSGVFATRKGPIMATPDAFKIVVHGKGGHGSAPHETIDPIFISLQIANAIYGITARQIDPVQPFVISITTIHSGTKDNIIPDDAEMQGTIRSLDENVRSKAKDYMRRIVSSICGIYGATCEVKFMEDVYPITVNNPEVTDEVMKILSSISTVVETEPVLGAEDFSRFLQKAPGMYFFLGTRNEKKGCIYPNHSSKFCVDEDVLKLGALAHALLAIKFSNK</sequence>
<dbReference type="EC" id="3.4.17.-"/>
<dbReference type="EMBL" id="AE006641">
    <property type="protein sequence ID" value="AAK42144.1"/>
    <property type="molecule type" value="Genomic_DNA"/>
</dbReference>
<dbReference type="PIR" id="A99361">
    <property type="entry name" value="A99361"/>
</dbReference>
<dbReference type="SMR" id="P58156"/>
<dbReference type="FunCoup" id="P58156">
    <property type="interactions" value="12"/>
</dbReference>
<dbReference type="STRING" id="273057.SSO1952"/>
<dbReference type="MEROPS" id="M20.008"/>
<dbReference type="PaxDb" id="273057-SSO1952"/>
<dbReference type="EnsemblBacteria" id="AAK42144">
    <property type="protein sequence ID" value="AAK42144"/>
    <property type="gene ID" value="SSO1952"/>
</dbReference>
<dbReference type="KEGG" id="sso:SSO1952"/>
<dbReference type="PATRIC" id="fig|273057.12.peg.2026"/>
<dbReference type="eggNOG" id="arCOG01108">
    <property type="taxonomic scope" value="Archaea"/>
</dbReference>
<dbReference type="HOGENOM" id="CLU_023257_0_1_2"/>
<dbReference type="InParanoid" id="P58156"/>
<dbReference type="PhylomeDB" id="P58156"/>
<dbReference type="Proteomes" id="UP000001974">
    <property type="component" value="Chromosome"/>
</dbReference>
<dbReference type="GO" id="GO:0004180">
    <property type="term" value="F:carboxypeptidase activity"/>
    <property type="evidence" value="ECO:0007669"/>
    <property type="project" value="UniProtKB-KW"/>
</dbReference>
<dbReference type="GO" id="GO:0016787">
    <property type="term" value="F:hydrolase activity"/>
    <property type="evidence" value="ECO:0000318"/>
    <property type="project" value="GO_Central"/>
</dbReference>
<dbReference type="GO" id="GO:0046872">
    <property type="term" value="F:metal ion binding"/>
    <property type="evidence" value="ECO:0007669"/>
    <property type="project" value="UniProtKB-KW"/>
</dbReference>
<dbReference type="GO" id="GO:0008237">
    <property type="term" value="F:metallopeptidase activity"/>
    <property type="evidence" value="ECO:0007669"/>
    <property type="project" value="UniProtKB-KW"/>
</dbReference>
<dbReference type="GO" id="GO:0006508">
    <property type="term" value="P:proteolysis"/>
    <property type="evidence" value="ECO:0007669"/>
    <property type="project" value="UniProtKB-KW"/>
</dbReference>
<dbReference type="CDD" id="cd08021">
    <property type="entry name" value="M20_Acy1_YhaA-like"/>
    <property type="match status" value="1"/>
</dbReference>
<dbReference type="FunFam" id="3.30.70.360:FF:000014">
    <property type="entry name" value="N-acyl-L-amino acid amidohydrolase"/>
    <property type="match status" value="1"/>
</dbReference>
<dbReference type="Gene3D" id="3.30.70.360">
    <property type="match status" value="1"/>
</dbReference>
<dbReference type="Gene3D" id="3.40.630.10">
    <property type="entry name" value="Zn peptidases"/>
    <property type="match status" value="1"/>
</dbReference>
<dbReference type="InterPro" id="IPR017439">
    <property type="entry name" value="Amidohydrolase"/>
</dbReference>
<dbReference type="InterPro" id="IPR036264">
    <property type="entry name" value="Bact_exopeptidase_dim_dom"/>
</dbReference>
<dbReference type="InterPro" id="IPR002933">
    <property type="entry name" value="Peptidase_M20"/>
</dbReference>
<dbReference type="InterPro" id="IPR011650">
    <property type="entry name" value="Peptidase_M20_dimer"/>
</dbReference>
<dbReference type="InterPro" id="IPR053493">
    <property type="entry name" value="Thermostable_CP"/>
</dbReference>
<dbReference type="NCBIfam" id="TIGR01891">
    <property type="entry name" value="amidohydrolases"/>
    <property type="match status" value="1"/>
</dbReference>
<dbReference type="NCBIfam" id="NF040868">
    <property type="entry name" value="carboxypep_CpsA"/>
    <property type="match status" value="1"/>
</dbReference>
<dbReference type="PANTHER" id="PTHR11014:SF63">
    <property type="entry name" value="METALLOPEPTIDASE, PUTATIVE (AFU_ORTHOLOGUE AFUA_6G09600)-RELATED"/>
    <property type="match status" value="1"/>
</dbReference>
<dbReference type="PANTHER" id="PTHR11014">
    <property type="entry name" value="PEPTIDASE M20 FAMILY MEMBER"/>
    <property type="match status" value="1"/>
</dbReference>
<dbReference type="Pfam" id="PF07687">
    <property type="entry name" value="M20_dimer"/>
    <property type="match status" value="1"/>
</dbReference>
<dbReference type="Pfam" id="PF01546">
    <property type="entry name" value="Peptidase_M20"/>
    <property type="match status" value="1"/>
</dbReference>
<dbReference type="PIRSF" id="PIRSF005962">
    <property type="entry name" value="Pept_M20D_amidohydro"/>
    <property type="match status" value="1"/>
</dbReference>
<dbReference type="SUPFAM" id="SSF55031">
    <property type="entry name" value="Bacterial exopeptidase dimerisation domain"/>
    <property type="match status" value="1"/>
</dbReference>
<dbReference type="SUPFAM" id="SSF53187">
    <property type="entry name" value="Zn-dependent exopeptidases"/>
    <property type="match status" value="1"/>
</dbReference>
<protein>
    <recommendedName>
        <fullName>Thermostable carboxypeptidase 2</fullName>
        <ecNumber>3.4.17.-</ecNumber>
    </recommendedName>
</protein>
<proteinExistence type="inferred from homology"/>
<organism>
    <name type="scientific">Saccharolobus solfataricus (strain ATCC 35092 / DSM 1617 / JCM 11322 / P2)</name>
    <name type="common">Sulfolobus solfataricus</name>
    <dbReference type="NCBI Taxonomy" id="273057"/>
    <lineage>
        <taxon>Archaea</taxon>
        <taxon>Thermoproteota</taxon>
        <taxon>Thermoprotei</taxon>
        <taxon>Sulfolobales</taxon>
        <taxon>Sulfolobaceae</taxon>
        <taxon>Saccharolobus</taxon>
    </lineage>
</organism>
<gene>
    <name type="primary">cpsA2</name>
    <name type="synonym">cpsA-2</name>
    <name type="ordered locus">SSO1952</name>
</gene>
<evidence type="ECO:0000250" key="1"/>
<evidence type="ECO:0000255" key="2"/>
<evidence type="ECO:0000305" key="3"/>
<keyword id="KW-0121">Carboxypeptidase</keyword>
<keyword id="KW-0378">Hydrolase</keyword>
<keyword id="KW-0479">Metal-binding</keyword>
<keyword id="KW-0482">Metalloprotease</keyword>
<keyword id="KW-0645">Protease</keyword>
<keyword id="KW-1185">Reference proteome</keyword>
<keyword id="KW-0862">Zinc</keyword>
<comment type="function">
    <text evidence="1">Can release basic, acidic, aromatic, and, to a lesser extent, aliphatic amino acids.</text>
</comment>
<comment type="cofactor">
    <cofactor evidence="1">
        <name>Zn(2+)</name>
        <dbReference type="ChEBI" id="CHEBI:29105"/>
    </cofactor>
</comment>
<comment type="subunit">
    <text evidence="1">Homotetramer.</text>
</comment>
<comment type="similarity">
    <text evidence="3">Belongs to the peptidase M20 family.</text>
</comment>
<feature type="chain" id="PRO_0000061948" description="Thermostable carboxypeptidase 2">
    <location>
        <begin position="1"/>
        <end position="393"/>
    </location>
</feature>
<feature type="active site" description="Proton donor" evidence="2">
    <location>
        <position position="302"/>
    </location>
</feature>
<feature type="active site" description="Nucleophile" evidence="2">
    <location>
        <position position="373"/>
    </location>
</feature>
<feature type="binding site" evidence="2">
    <location>
        <position position="104"/>
    </location>
    <ligand>
        <name>Zn(2+)</name>
        <dbReference type="ChEBI" id="CHEBI:29105"/>
    </ligand>
</feature>
<feature type="binding site" evidence="2">
    <location>
        <position position="109"/>
    </location>
    <ligand>
        <name>Zn(2+)</name>
        <dbReference type="ChEBI" id="CHEBI:29105"/>
    </ligand>
</feature>
<feature type="binding site" evidence="2">
    <location>
        <position position="245"/>
    </location>
    <ligand>
        <name>Zn(2+)</name>
        <dbReference type="ChEBI" id="CHEBI:29105"/>
    </ligand>
</feature>